<reference key="1">
    <citation type="journal article" date="1989" name="Virology">
        <title>Sequences of VP9 genes from short and supershort rotavirus strains.</title>
        <authorList>
            <person name="Nuttall S.D."/>
            <person name="Hum C.P."/>
            <person name="Holmes I.H."/>
            <person name="Dyall-Smith M.L."/>
        </authorList>
    </citation>
    <scope>NUCLEOTIDE SEQUENCE [GENOMIC RNA]</scope>
</reference>
<organismHost>
    <name type="scientific">Homo sapiens</name>
    <name type="common">Human</name>
    <dbReference type="NCBI Taxonomy" id="9606"/>
</organismHost>
<accession>P18037</accession>
<evidence type="ECO:0000255" key="1">
    <source>
        <dbReference type="HAMAP-Rule" id="MF_04092"/>
    </source>
</evidence>
<evidence type="ECO:0000256" key="2">
    <source>
        <dbReference type="SAM" id="MobiDB-lite"/>
    </source>
</evidence>
<sequence>MSLSIDVTSLPSISSSVYKNESSSTTSTISGKSIGRSEQYISPDAEAFNKYMLSKSPEDIGPSDSASNDPLTSFSIRSNAVKTNADAGVSMDSSAQSRPSSDIGYDQMDFSLNKGIKIDATVDSSISISTTSQKEKSKQENKNKYKKCYPKIEAESDSDDYILDDSDSDDGKCKNCKYKKKYFALRLRMKQVAMQLIKDL</sequence>
<name>NSP5_ROTH5</name>
<organism>
    <name type="scientific">Rotavirus A (strain RVA/Human/Australia/RV-5/1981/G2P1B[4])</name>
    <name type="common">RV-A</name>
    <name type="synonym">Rotavirus A (strain RV5)</name>
    <dbReference type="NCBI Taxonomy" id="31569"/>
    <lineage>
        <taxon>Viruses</taxon>
        <taxon>Riboviria</taxon>
        <taxon>Orthornavirae</taxon>
        <taxon>Duplornaviricota</taxon>
        <taxon>Resentoviricetes</taxon>
        <taxon>Reovirales</taxon>
        <taxon>Sedoreoviridae</taxon>
        <taxon>Rotavirus</taxon>
        <taxon>Rotavirus A</taxon>
    </lineage>
</organism>
<keyword id="KW-0325">Glycoprotein</keyword>
<keyword id="KW-1035">Host cytoplasm</keyword>
<keyword id="KW-0460">Magnesium</keyword>
<keyword id="KW-0479">Metal-binding</keyword>
<keyword id="KW-0547">Nucleotide-binding</keyword>
<keyword id="KW-0597">Phosphoprotein</keyword>
<keyword id="KW-0694">RNA-binding</keyword>
<protein>
    <recommendedName>
        <fullName evidence="1">Non-structural protein 5</fullName>
        <shortName evidence="1">NSP5</shortName>
    </recommendedName>
    <alternativeName>
        <fullName evidence="1">NS26</fullName>
    </alternativeName>
</protein>
<feature type="chain" id="PRO_0000149634" description="Non-structural protein 5">
    <location>
        <begin position="1"/>
        <end position="200"/>
    </location>
</feature>
<feature type="region of interest" description="Disordered" evidence="2">
    <location>
        <begin position="13"/>
        <end position="38"/>
    </location>
</feature>
<feature type="region of interest" description="Disordered" evidence="2">
    <location>
        <begin position="53"/>
        <end position="72"/>
    </location>
</feature>
<feature type="region of interest" description="Disordered" evidence="2">
    <location>
        <begin position="85"/>
        <end position="106"/>
    </location>
</feature>
<feature type="compositionally biased region" description="Low complexity" evidence="2">
    <location>
        <begin position="22"/>
        <end position="37"/>
    </location>
</feature>
<feature type="compositionally biased region" description="Polar residues" evidence="2">
    <location>
        <begin position="91"/>
        <end position="100"/>
    </location>
</feature>
<feature type="binding site" evidence="1">
    <location>
        <position position="92"/>
    </location>
    <ligand>
        <name>Mg(2+)</name>
        <dbReference type="ChEBI" id="CHEBI:18420"/>
    </ligand>
</feature>
<feature type="modified residue" description="Phosphoserine; by host CK1" evidence="1">
    <location>
        <position position="67"/>
    </location>
</feature>
<feature type="modified residue" description="Phosphoserine; by host" evidence="1">
    <location>
        <position position="156"/>
    </location>
</feature>
<feature type="modified residue" description="Phosphoserine; by host" evidence="1">
    <location>
        <position position="158"/>
    </location>
</feature>
<feature type="modified residue" description="Phosphoserine; by host" evidence="1">
    <location>
        <position position="166"/>
    </location>
</feature>
<feature type="modified residue" description="Phosphoserine; by host" evidence="1">
    <location>
        <position position="168"/>
    </location>
</feature>
<dbReference type="EMBL" id="M28378">
    <property type="protein sequence ID" value="AAA57457.1"/>
    <property type="molecule type" value="Genomic_RNA"/>
</dbReference>
<dbReference type="SMR" id="P18037"/>
<dbReference type="GO" id="GO:0030430">
    <property type="term" value="C:host cell cytoplasm"/>
    <property type="evidence" value="ECO:0007669"/>
    <property type="project" value="UniProtKB-SubCell"/>
</dbReference>
<dbReference type="GO" id="GO:0016887">
    <property type="term" value="F:ATP hydrolysis activity"/>
    <property type="evidence" value="ECO:0007669"/>
    <property type="project" value="UniProtKB-UniRule"/>
</dbReference>
<dbReference type="GO" id="GO:0000287">
    <property type="term" value="F:magnesium ion binding"/>
    <property type="evidence" value="ECO:0007669"/>
    <property type="project" value="UniProtKB-UniRule"/>
</dbReference>
<dbReference type="GO" id="GO:0000166">
    <property type="term" value="F:nucleotide binding"/>
    <property type="evidence" value="ECO:0007669"/>
    <property type="project" value="UniProtKB-UniRule"/>
</dbReference>
<dbReference type="GO" id="GO:0003723">
    <property type="term" value="F:RNA binding"/>
    <property type="evidence" value="ECO:0007669"/>
    <property type="project" value="UniProtKB-UniRule"/>
</dbReference>
<dbReference type="GO" id="GO:0019079">
    <property type="term" value="P:viral genome replication"/>
    <property type="evidence" value="ECO:0007669"/>
    <property type="project" value="UniProtKB-UniRule"/>
</dbReference>
<dbReference type="HAMAP" id="MF_04092">
    <property type="entry name" value="ROTA_NSP5"/>
    <property type="match status" value="1"/>
</dbReference>
<dbReference type="InterPro" id="IPR002512">
    <property type="entry name" value="Rotavirus_A/C_NSP5"/>
</dbReference>
<dbReference type="Pfam" id="PF01525">
    <property type="entry name" value="Rota_NS26"/>
    <property type="match status" value="1"/>
</dbReference>
<dbReference type="PIRSF" id="PIRSF004006">
    <property type="entry name" value="Rota_NS26"/>
    <property type="match status" value="1"/>
</dbReference>
<comment type="function">
    <text evidence="1">Plays an essential role in the viral genome replication. Participates, together with NSP2, in the formation of viral factories (viroplasms), which are large inclusions in the host cytoplasm where replication intermediates are assembled and viral RNA replication takes place. Orchestrates the recruitment of viroplasmic proteins such as capsid proteins to these factories. Participates in the selective exclusion of host proteins from stress granules (SG) and P bodies (PB). Also participates in the sequestration of these remodeled organelles in viral factories.</text>
</comment>
<comment type="cofactor">
    <cofactor evidence="1">
        <name>Mg(2+)</name>
        <dbReference type="ChEBI" id="CHEBI:18420"/>
    </cofactor>
</comment>
<comment type="subunit">
    <text evidence="1">Homodimer. Interacts with VP1. Interacts with VP2. Interacts with NSP2; this interaction leads to up-regulation of NSP5 hyperphosphorylation and formation of virus factories. Interacts with NSP6. Participates in the selective exclusion of host proteins from stress granules (SG) and P bodies (PB). Also participates in the sequestration of these remodeled organelles in viral factories.</text>
</comment>
<comment type="subcellular location">
    <subcellularLocation>
        <location evidence="1">Host cytoplasm</location>
    </subcellularLocation>
    <text evidence="1">Found in spherical cytoplasmic structures, called virus factories, that appear early after infection and are the site of viral replication and packaging.</text>
</comment>
<comment type="PTM">
    <text evidence="1">O-glycosylated.</text>
</comment>
<comment type="PTM">
    <text evidence="1">Hyperphosphorylated on serine residues, when in dimeric form. Phosphorylation by host CK1 is required for the hyperphosphorylation of NSP5 dimer.</text>
</comment>
<comment type="similarity">
    <text evidence="1">Belongs to the rotavirus NSP5 family.</text>
</comment>
<proteinExistence type="inferred from homology"/>